<protein>
    <recommendedName>
        <fullName>Defense protein l(2)34Fc</fullName>
    </recommendedName>
</protein>
<accession>Q9V3Y3</accession>
<gene>
    <name type="primary">l(2)34Fc</name>
    <name type="ORF">CG7532</name>
</gene>
<name>DFP_DROME</name>
<dbReference type="EMBL" id="AE014134">
    <property type="protein sequence ID" value="AAF53387.1"/>
    <property type="molecule type" value="Genomic_DNA"/>
</dbReference>
<dbReference type="EMBL" id="AY071565">
    <property type="protein sequence ID" value="AAL49187.1"/>
    <property type="molecule type" value="mRNA"/>
</dbReference>
<dbReference type="EMBL" id="AY113534">
    <property type="protein sequence ID" value="AAM29539.1"/>
    <property type="molecule type" value="mRNA"/>
</dbReference>
<dbReference type="RefSeq" id="NP_001285930.1">
    <property type="nucleotide sequence ID" value="NM_001299001.1"/>
</dbReference>
<dbReference type="RefSeq" id="NP_609710.1">
    <property type="nucleotide sequence ID" value="NM_135866.4"/>
</dbReference>
<dbReference type="SMR" id="Q9V3Y3"/>
<dbReference type="BioGRID" id="60863">
    <property type="interactions" value="1"/>
</dbReference>
<dbReference type="FunCoup" id="Q9V3Y3">
    <property type="interactions" value="1"/>
</dbReference>
<dbReference type="IntAct" id="Q9V3Y3">
    <property type="interactions" value="1"/>
</dbReference>
<dbReference type="STRING" id="7227.FBpp0310269"/>
<dbReference type="PaxDb" id="7227-FBpp0080212"/>
<dbReference type="DNASU" id="34838"/>
<dbReference type="EnsemblMetazoa" id="FBtr0080640">
    <property type="protein sequence ID" value="FBpp0080212"/>
    <property type="gene ID" value="FBgn0261534"/>
</dbReference>
<dbReference type="EnsemblMetazoa" id="FBtr0343680">
    <property type="protein sequence ID" value="FBpp0310269"/>
    <property type="gene ID" value="FBgn0261534"/>
</dbReference>
<dbReference type="GeneID" id="34838"/>
<dbReference type="KEGG" id="dme:Dmel_CG7532"/>
<dbReference type="UCSC" id="CG7532-RA">
    <property type="organism name" value="d. melanogaster"/>
</dbReference>
<dbReference type="AGR" id="FB:FBgn0261534"/>
<dbReference type="FlyBase" id="FBgn0261534">
    <property type="gene designation" value="l(2)34Fc"/>
</dbReference>
<dbReference type="VEuPathDB" id="VectorBase:FBgn0261534"/>
<dbReference type="eggNOG" id="ENOG502S86D">
    <property type="taxonomic scope" value="Eukaryota"/>
</dbReference>
<dbReference type="HOGENOM" id="CLU_091827_2_0_1"/>
<dbReference type="InParanoid" id="Q9V3Y3"/>
<dbReference type="OMA" id="WINVRSN"/>
<dbReference type="OrthoDB" id="6418377at2759"/>
<dbReference type="PhylomeDB" id="Q9V3Y3"/>
<dbReference type="BioGRID-ORCS" id="34838">
    <property type="hits" value="0 hits in 1 CRISPR screen"/>
</dbReference>
<dbReference type="GenomeRNAi" id="34838"/>
<dbReference type="PRO" id="PR:Q9V3Y3"/>
<dbReference type="Proteomes" id="UP000000803">
    <property type="component" value="Chromosome 2L"/>
</dbReference>
<dbReference type="Bgee" id="FBgn0261534">
    <property type="expression patterns" value="Expressed in capitellum (Drosophila) and 29 other cell types or tissues"/>
</dbReference>
<dbReference type="ExpressionAtlas" id="Q9V3Y3">
    <property type="expression patterns" value="baseline and differential"/>
</dbReference>
<dbReference type="GO" id="GO:0005576">
    <property type="term" value="C:extracellular region"/>
    <property type="evidence" value="ECO:0000250"/>
    <property type="project" value="UniProtKB"/>
</dbReference>
<dbReference type="GO" id="GO:0016020">
    <property type="term" value="C:membrane"/>
    <property type="evidence" value="ECO:0000318"/>
    <property type="project" value="GO_Central"/>
</dbReference>
<dbReference type="GO" id="GO:0042742">
    <property type="term" value="P:defense response to bacterium"/>
    <property type="evidence" value="ECO:0007669"/>
    <property type="project" value="UniProtKB-KW"/>
</dbReference>
<dbReference type="GO" id="GO:0042832">
    <property type="term" value="P:defense response to protozoan"/>
    <property type="evidence" value="ECO:0000315"/>
    <property type="project" value="UniProtKB"/>
</dbReference>
<dbReference type="GO" id="GO:0045087">
    <property type="term" value="P:innate immune response"/>
    <property type="evidence" value="ECO:0007669"/>
    <property type="project" value="UniProtKB-KW"/>
</dbReference>
<dbReference type="GO" id="GO:0050777">
    <property type="term" value="P:negative regulation of immune response"/>
    <property type="evidence" value="ECO:0000315"/>
    <property type="project" value="UniProtKB"/>
</dbReference>
<dbReference type="CDD" id="cd08544">
    <property type="entry name" value="Reeler"/>
    <property type="match status" value="1"/>
</dbReference>
<dbReference type="FunFam" id="2.60.40.4060:FF:000008">
    <property type="entry name" value="Defense protein l(2)34Fc"/>
    <property type="match status" value="1"/>
</dbReference>
<dbReference type="Gene3D" id="2.60.40.4060">
    <property type="entry name" value="Reeler domain"/>
    <property type="match status" value="1"/>
</dbReference>
<dbReference type="InterPro" id="IPR051237">
    <property type="entry name" value="Ferric-chelate_Red/DefProt"/>
</dbReference>
<dbReference type="InterPro" id="IPR002861">
    <property type="entry name" value="Reeler_dom"/>
</dbReference>
<dbReference type="InterPro" id="IPR042307">
    <property type="entry name" value="Reeler_sf"/>
</dbReference>
<dbReference type="PANTHER" id="PTHR45828">
    <property type="entry name" value="CYTOCHROME B561/FERRIC REDUCTASE TRANSMEMBRANE"/>
    <property type="match status" value="1"/>
</dbReference>
<dbReference type="PANTHER" id="PTHR45828:SF42">
    <property type="entry name" value="DEFENSE PROTEIN L(2)34FC"/>
    <property type="match status" value="1"/>
</dbReference>
<dbReference type="Pfam" id="PF02014">
    <property type="entry name" value="Reeler"/>
    <property type="match status" value="1"/>
</dbReference>
<dbReference type="PROSITE" id="PS51019">
    <property type="entry name" value="REELIN"/>
    <property type="match status" value="1"/>
</dbReference>
<reference key="1">
    <citation type="journal article" date="2000" name="Science">
        <title>The genome sequence of Drosophila melanogaster.</title>
        <authorList>
            <person name="Adams M.D."/>
            <person name="Celniker S.E."/>
            <person name="Holt R.A."/>
            <person name="Evans C.A."/>
            <person name="Gocayne J.D."/>
            <person name="Amanatides P.G."/>
            <person name="Scherer S.E."/>
            <person name="Li P.W."/>
            <person name="Hoskins R.A."/>
            <person name="Galle R.F."/>
            <person name="George R.A."/>
            <person name="Lewis S.E."/>
            <person name="Richards S."/>
            <person name="Ashburner M."/>
            <person name="Henderson S.N."/>
            <person name="Sutton G.G."/>
            <person name="Wortman J.R."/>
            <person name="Yandell M.D."/>
            <person name="Zhang Q."/>
            <person name="Chen L.X."/>
            <person name="Brandon R.C."/>
            <person name="Rogers Y.-H.C."/>
            <person name="Blazej R.G."/>
            <person name="Champe M."/>
            <person name="Pfeiffer B.D."/>
            <person name="Wan K.H."/>
            <person name="Doyle C."/>
            <person name="Baxter E.G."/>
            <person name="Helt G."/>
            <person name="Nelson C.R."/>
            <person name="Miklos G.L.G."/>
            <person name="Abril J.F."/>
            <person name="Agbayani A."/>
            <person name="An H.-J."/>
            <person name="Andrews-Pfannkoch C."/>
            <person name="Baldwin D."/>
            <person name="Ballew R.M."/>
            <person name="Basu A."/>
            <person name="Baxendale J."/>
            <person name="Bayraktaroglu L."/>
            <person name="Beasley E.M."/>
            <person name="Beeson K.Y."/>
            <person name="Benos P.V."/>
            <person name="Berman B.P."/>
            <person name="Bhandari D."/>
            <person name="Bolshakov S."/>
            <person name="Borkova D."/>
            <person name="Botchan M.R."/>
            <person name="Bouck J."/>
            <person name="Brokstein P."/>
            <person name="Brottier P."/>
            <person name="Burtis K.C."/>
            <person name="Busam D.A."/>
            <person name="Butler H."/>
            <person name="Cadieu E."/>
            <person name="Center A."/>
            <person name="Chandra I."/>
            <person name="Cherry J.M."/>
            <person name="Cawley S."/>
            <person name="Dahlke C."/>
            <person name="Davenport L.B."/>
            <person name="Davies P."/>
            <person name="de Pablos B."/>
            <person name="Delcher A."/>
            <person name="Deng Z."/>
            <person name="Mays A.D."/>
            <person name="Dew I."/>
            <person name="Dietz S.M."/>
            <person name="Dodson K."/>
            <person name="Doup L.E."/>
            <person name="Downes M."/>
            <person name="Dugan-Rocha S."/>
            <person name="Dunkov B.C."/>
            <person name="Dunn P."/>
            <person name="Durbin K.J."/>
            <person name="Evangelista C.C."/>
            <person name="Ferraz C."/>
            <person name="Ferriera S."/>
            <person name="Fleischmann W."/>
            <person name="Fosler C."/>
            <person name="Gabrielian A.E."/>
            <person name="Garg N.S."/>
            <person name="Gelbart W.M."/>
            <person name="Glasser K."/>
            <person name="Glodek A."/>
            <person name="Gong F."/>
            <person name="Gorrell J.H."/>
            <person name="Gu Z."/>
            <person name="Guan P."/>
            <person name="Harris M."/>
            <person name="Harris N.L."/>
            <person name="Harvey D.A."/>
            <person name="Heiman T.J."/>
            <person name="Hernandez J.R."/>
            <person name="Houck J."/>
            <person name="Hostin D."/>
            <person name="Houston K.A."/>
            <person name="Howland T.J."/>
            <person name="Wei M.-H."/>
            <person name="Ibegwam C."/>
            <person name="Jalali M."/>
            <person name="Kalush F."/>
            <person name="Karpen G.H."/>
            <person name="Ke Z."/>
            <person name="Kennison J.A."/>
            <person name="Ketchum K.A."/>
            <person name="Kimmel B.E."/>
            <person name="Kodira C.D."/>
            <person name="Kraft C.L."/>
            <person name="Kravitz S."/>
            <person name="Kulp D."/>
            <person name="Lai Z."/>
            <person name="Lasko P."/>
            <person name="Lei Y."/>
            <person name="Levitsky A.A."/>
            <person name="Li J.H."/>
            <person name="Li Z."/>
            <person name="Liang Y."/>
            <person name="Lin X."/>
            <person name="Liu X."/>
            <person name="Mattei B."/>
            <person name="McIntosh T.C."/>
            <person name="McLeod M.P."/>
            <person name="McPherson D."/>
            <person name="Merkulov G."/>
            <person name="Milshina N.V."/>
            <person name="Mobarry C."/>
            <person name="Morris J."/>
            <person name="Moshrefi A."/>
            <person name="Mount S.M."/>
            <person name="Moy M."/>
            <person name="Murphy B."/>
            <person name="Murphy L."/>
            <person name="Muzny D.M."/>
            <person name="Nelson D.L."/>
            <person name="Nelson D.R."/>
            <person name="Nelson K.A."/>
            <person name="Nixon K."/>
            <person name="Nusskern D.R."/>
            <person name="Pacleb J.M."/>
            <person name="Palazzolo M."/>
            <person name="Pittman G.S."/>
            <person name="Pan S."/>
            <person name="Pollard J."/>
            <person name="Puri V."/>
            <person name="Reese M.G."/>
            <person name="Reinert K."/>
            <person name="Remington K."/>
            <person name="Saunders R.D.C."/>
            <person name="Scheeler F."/>
            <person name="Shen H."/>
            <person name="Shue B.C."/>
            <person name="Siden-Kiamos I."/>
            <person name="Simpson M."/>
            <person name="Skupski M.P."/>
            <person name="Smith T.J."/>
            <person name="Spier E."/>
            <person name="Spradling A.C."/>
            <person name="Stapleton M."/>
            <person name="Strong R."/>
            <person name="Sun E."/>
            <person name="Svirskas R."/>
            <person name="Tector C."/>
            <person name="Turner R."/>
            <person name="Venter E."/>
            <person name="Wang A.H."/>
            <person name="Wang X."/>
            <person name="Wang Z.-Y."/>
            <person name="Wassarman D.A."/>
            <person name="Weinstock G.M."/>
            <person name="Weissenbach J."/>
            <person name="Williams S.M."/>
            <person name="Woodage T."/>
            <person name="Worley K.C."/>
            <person name="Wu D."/>
            <person name="Yang S."/>
            <person name="Yao Q.A."/>
            <person name="Ye J."/>
            <person name="Yeh R.-F."/>
            <person name="Zaveri J.S."/>
            <person name="Zhan M."/>
            <person name="Zhang G."/>
            <person name="Zhao Q."/>
            <person name="Zheng L."/>
            <person name="Zheng X.H."/>
            <person name="Zhong F.N."/>
            <person name="Zhong W."/>
            <person name="Zhou X."/>
            <person name="Zhu S.C."/>
            <person name="Zhu X."/>
            <person name="Smith H.O."/>
            <person name="Gibbs R.A."/>
            <person name="Myers E.W."/>
            <person name="Rubin G.M."/>
            <person name="Venter J.C."/>
        </authorList>
    </citation>
    <scope>NUCLEOTIDE SEQUENCE [LARGE SCALE GENOMIC DNA]</scope>
    <source>
        <strain>Berkeley</strain>
    </source>
</reference>
<reference key="2">
    <citation type="journal article" date="2002" name="Genome Biol.">
        <title>Annotation of the Drosophila melanogaster euchromatic genome: a systematic review.</title>
        <authorList>
            <person name="Misra S."/>
            <person name="Crosby M.A."/>
            <person name="Mungall C.J."/>
            <person name="Matthews B.B."/>
            <person name="Campbell K.S."/>
            <person name="Hradecky P."/>
            <person name="Huang Y."/>
            <person name="Kaminker J.S."/>
            <person name="Millburn G.H."/>
            <person name="Prochnik S.E."/>
            <person name="Smith C.D."/>
            <person name="Tupy J.L."/>
            <person name="Whitfield E.J."/>
            <person name="Bayraktaroglu L."/>
            <person name="Berman B.P."/>
            <person name="Bettencourt B.R."/>
            <person name="Celniker S.E."/>
            <person name="de Grey A.D.N.J."/>
            <person name="Drysdale R.A."/>
            <person name="Harris N.L."/>
            <person name="Richter J."/>
            <person name="Russo S."/>
            <person name="Schroeder A.J."/>
            <person name="Shu S.Q."/>
            <person name="Stapleton M."/>
            <person name="Yamada C."/>
            <person name="Ashburner M."/>
            <person name="Gelbart W.M."/>
            <person name="Rubin G.M."/>
            <person name="Lewis S.E."/>
        </authorList>
    </citation>
    <scope>GENOME REANNOTATION</scope>
    <source>
        <strain>Berkeley</strain>
    </source>
</reference>
<reference key="3">
    <citation type="journal article" date="2002" name="Genome Biol.">
        <title>A Drosophila full-length cDNA resource.</title>
        <authorList>
            <person name="Stapleton M."/>
            <person name="Carlson J.W."/>
            <person name="Brokstein P."/>
            <person name="Yu C."/>
            <person name="Champe M."/>
            <person name="George R.A."/>
            <person name="Guarin H."/>
            <person name="Kronmiller B."/>
            <person name="Pacleb J.M."/>
            <person name="Park S."/>
            <person name="Wan K.H."/>
            <person name="Rubin G.M."/>
            <person name="Celniker S.E."/>
        </authorList>
    </citation>
    <scope>NUCLEOTIDE SEQUENCE [LARGE SCALE MRNA]</scope>
    <source>
        <strain>Berkeley</strain>
        <tissue>Embryo</tissue>
    </source>
</reference>
<reference key="4">
    <citation type="journal article" date="2002" name="EMBO J.">
        <title>The Toll and Imd pathways are the major regulators of the immune response in Drosophila.</title>
        <authorList>
            <person name="De Gregorio E."/>
            <person name="Spellman P.T."/>
            <person name="Tzou P."/>
            <person name="Rubin G.M."/>
            <person name="Lemaitre B."/>
        </authorList>
    </citation>
    <scope>FUNCTION</scope>
</reference>
<sequence>MFRLLVLAACLAISVHAYSDGAPKAACRDLTPQHGAKLQVTKPPYSISGPSHVRSDQKLTLTLGGDEFLGFMIQARDGQNRVVGQFQVVDSVHSQTLDCSGKDDTITHLSAQKGKPLTGITFDWIPPAGYKGNVKFMATVVQTGFVYWVGRVTKDIDVE</sequence>
<comment type="function">
    <text evidence="4">May have antimicrobial activity. A late response immune regulated gene that is negatively regulated by spz during the immune response.</text>
</comment>
<comment type="subcellular location">
    <subcellularLocation>
        <location evidence="1">Secreted</location>
    </subcellularLocation>
</comment>
<comment type="similarity">
    <text evidence="5">Belongs to the insect defense protein family.</text>
</comment>
<evidence type="ECO:0000250" key="1"/>
<evidence type="ECO:0000255" key="2"/>
<evidence type="ECO:0000255" key="3">
    <source>
        <dbReference type="PROSITE-ProRule" id="PRU00363"/>
    </source>
</evidence>
<evidence type="ECO:0000269" key="4">
    <source>
    </source>
</evidence>
<evidence type="ECO:0000305" key="5"/>
<keyword id="KW-0044">Antibiotic</keyword>
<keyword id="KW-0929">Antimicrobial</keyword>
<keyword id="KW-1015">Disulfide bond</keyword>
<keyword id="KW-0391">Immunity</keyword>
<keyword id="KW-0399">Innate immunity</keyword>
<keyword id="KW-1185">Reference proteome</keyword>
<keyword id="KW-0964">Secreted</keyword>
<keyword id="KW-0732">Signal</keyword>
<feature type="signal peptide" evidence="2">
    <location>
        <begin position="1"/>
        <end position="17"/>
    </location>
</feature>
<feature type="chain" id="PRO_0000372770" description="Defense protein l(2)34Fc">
    <location>
        <begin position="18"/>
        <end position="159"/>
    </location>
</feature>
<feature type="domain" description="Reelin" evidence="3">
    <location>
        <begin position="18"/>
        <end position="159"/>
    </location>
</feature>
<feature type="disulfide bond" evidence="2">
    <location>
        <begin position="27"/>
        <end position="99"/>
    </location>
</feature>
<proteinExistence type="evidence at transcript level"/>
<organism>
    <name type="scientific">Drosophila melanogaster</name>
    <name type="common">Fruit fly</name>
    <dbReference type="NCBI Taxonomy" id="7227"/>
    <lineage>
        <taxon>Eukaryota</taxon>
        <taxon>Metazoa</taxon>
        <taxon>Ecdysozoa</taxon>
        <taxon>Arthropoda</taxon>
        <taxon>Hexapoda</taxon>
        <taxon>Insecta</taxon>
        <taxon>Pterygota</taxon>
        <taxon>Neoptera</taxon>
        <taxon>Endopterygota</taxon>
        <taxon>Diptera</taxon>
        <taxon>Brachycera</taxon>
        <taxon>Muscomorpha</taxon>
        <taxon>Ephydroidea</taxon>
        <taxon>Drosophilidae</taxon>
        <taxon>Drosophila</taxon>
        <taxon>Sophophora</taxon>
    </lineage>
</organism>